<comment type="similarity">
    <text evidence="1">Belongs to the eukaryotic ribosomal protein eL13 family.</text>
</comment>
<reference key="1">
    <citation type="journal article" date="2009" name="Proc. Natl. Acad. Sci. U.S.A.">
        <title>Biogeography of the Sulfolobus islandicus pan-genome.</title>
        <authorList>
            <person name="Reno M.L."/>
            <person name="Held N.L."/>
            <person name="Fields C.J."/>
            <person name="Burke P.V."/>
            <person name="Whitaker R.J."/>
        </authorList>
    </citation>
    <scope>NUCLEOTIDE SEQUENCE [LARGE SCALE GENOMIC DNA]</scope>
    <source>
        <strain>M.16.4 / Kamchatka #3</strain>
    </source>
</reference>
<keyword id="KW-0687">Ribonucleoprotein</keyword>
<keyword id="KW-0689">Ribosomal protein</keyword>
<gene>
    <name evidence="1" type="primary">rpl13e</name>
    <name type="ordered locus">M164_0252</name>
</gene>
<protein>
    <recommendedName>
        <fullName evidence="1">Large ribosomal subunit protein eL13</fullName>
    </recommendedName>
    <alternativeName>
        <fullName evidence="2">50S ribosomal protein L13e</fullName>
    </alternativeName>
</protein>
<accession>C4KKE5</accession>
<sequence>MEFPKALIKRPNYHFEYPHKRKDKRIGRGFSIGELEKAGLNINNARKLGIIVDIRRKSVHEENVEVLKKFLEQLSNQKS</sequence>
<evidence type="ECO:0000255" key="1">
    <source>
        <dbReference type="HAMAP-Rule" id="MF_00499"/>
    </source>
</evidence>
<evidence type="ECO:0000305" key="2"/>
<name>RL13E_SACI6</name>
<feature type="chain" id="PRO_1000206484" description="Large ribosomal subunit protein eL13">
    <location>
        <begin position="1"/>
        <end position="79"/>
    </location>
</feature>
<dbReference type="EMBL" id="CP001402">
    <property type="protein sequence ID" value="ACR40886.1"/>
    <property type="molecule type" value="Genomic_DNA"/>
</dbReference>
<dbReference type="RefSeq" id="WP_012710410.1">
    <property type="nucleotide sequence ID" value="NC_012726.1"/>
</dbReference>
<dbReference type="SMR" id="C4KKE5"/>
<dbReference type="KEGG" id="sid:M164_0252"/>
<dbReference type="HOGENOM" id="CLU_179008_0_0_2"/>
<dbReference type="Proteomes" id="UP000001479">
    <property type="component" value="Chromosome"/>
</dbReference>
<dbReference type="GO" id="GO:1990904">
    <property type="term" value="C:ribonucleoprotein complex"/>
    <property type="evidence" value="ECO:0007669"/>
    <property type="project" value="UniProtKB-KW"/>
</dbReference>
<dbReference type="GO" id="GO:0005840">
    <property type="term" value="C:ribosome"/>
    <property type="evidence" value="ECO:0007669"/>
    <property type="project" value="UniProtKB-KW"/>
</dbReference>
<dbReference type="GO" id="GO:0003735">
    <property type="term" value="F:structural constituent of ribosome"/>
    <property type="evidence" value="ECO:0007669"/>
    <property type="project" value="InterPro"/>
</dbReference>
<dbReference type="GO" id="GO:0006412">
    <property type="term" value="P:translation"/>
    <property type="evidence" value="ECO:0007669"/>
    <property type="project" value="UniProtKB-UniRule"/>
</dbReference>
<dbReference type="HAMAP" id="MF_00499">
    <property type="entry name" value="Ribosomal_eL13"/>
    <property type="match status" value="1"/>
</dbReference>
<dbReference type="InterPro" id="IPR001380">
    <property type="entry name" value="Ribosomal_eL13"/>
</dbReference>
<dbReference type="NCBIfam" id="NF008914">
    <property type="entry name" value="PRK12277.1"/>
    <property type="match status" value="1"/>
</dbReference>
<dbReference type="Pfam" id="PF01294">
    <property type="entry name" value="Ribosomal_L13e"/>
    <property type="match status" value="1"/>
</dbReference>
<organism>
    <name type="scientific">Saccharolobus islandicus (strain M.16.4 / Kamchatka #3)</name>
    <name type="common">Sulfolobus islandicus</name>
    <dbReference type="NCBI Taxonomy" id="426118"/>
    <lineage>
        <taxon>Archaea</taxon>
        <taxon>Thermoproteota</taxon>
        <taxon>Thermoprotei</taxon>
        <taxon>Sulfolobales</taxon>
        <taxon>Sulfolobaceae</taxon>
        <taxon>Saccharolobus</taxon>
    </lineage>
</organism>
<proteinExistence type="inferred from homology"/>